<keyword id="KW-0067">ATP-binding</keyword>
<keyword id="KW-0963">Cytoplasm</keyword>
<keyword id="KW-0418">Kinase</keyword>
<keyword id="KW-0460">Magnesium</keyword>
<keyword id="KW-0479">Metal-binding</keyword>
<keyword id="KW-0546">Nucleotide metabolism</keyword>
<keyword id="KW-0547">Nucleotide-binding</keyword>
<keyword id="KW-0597">Phosphoprotein</keyword>
<keyword id="KW-0808">Transferase</keyword>
<gene>
    <name evidence="1" type="primary">ndk</name>
    <name type="ordered locus">mma_2131</name>
</gene>
<protein>
    <recommendedName>
        <fullName evidence="1">Nucleoside diphosphate kinase</fullName>
        <shortName evidence="1">NDK</shortName>
        <shortName evidence="1">NDP kinase</shortName>
        <ecNumber evidence="1">2.7.4.6</ecNumber>
    </recommendedName>
    <alternativeName>
        <fullName evidence="1">Nucleoside-2-P kinase</fullName>
    </alternativeName>
</protein>
<feature type="chain" id="PRO_1000026242" description="Nucleoside diphosphate kinase">
    <location>
        <begin position="1"/>
        <end position="141"/>
    </location>
</feature>
<feature type="active site" description="Pros-phosphohistidine intermediate" evidence="1">
    <location>
        <position position="117"/>
    </location>
</feature>
<feature type="binding site" evidence="1">
    <location>
        <position position="11"/>
    </location>
    <ligand>
        <name>ATP</name>
        <dbReference type="ChEBI" id="CHEBI:30616"/>
    </ligand>
</feature>
<feature type="binding site" evidence="1">
    <location>
        <position position="59"/>
    </location>
    <ligand>
        <name>ATP</name>
        <dbReference type="ChEBI" id="CHEBI:30616"/>
    </ligand>
</feature>
<feature type="binding site" evidence="1">
    <location>
        <position position="87"/>
    </location>
    <ligand>
        <name>ATP</name>
        <dbReference type="ChEBI" id="CHEBI:30616"/>
    </ligand>
</feature>
<feature type="binding site" evidence="1">
    <location>
        <position position="93"/>
    </location>
    <ligand>
        <name>ATP</name>
        <dbReference type="ChEBI" id="CHEBI:30616"/>
    </ligand>
</feature>
<feature type="binding site" evidence="1">
    <location>
        <position position="104"/>
    </location>
    <ligand>
        <name>ATP</name>
        <dbReference type="ChEBI" id="CHEBI:30616"/>
    </ligand>
</feature>
<feature type="binding site" evidence="1">
    <location>
        <position position="114"/>
    </location>
    <ligand>
        <name>ATP</name>
        <dbReference type="ChEBI" id="CHEBI:30616"/>
    </ligand>
</feature>
<sequence>MAIERTLSIIKPDAVAKNVIGQIYSRFEGAGLKIVAARMTQLSRAEAEGFYAVHSARPFFKDLVDFMISGPVIIQVLEGENAIIKHRDLMGATDPKKADKGTIRADFADSIDANAVHGSDAEETAKVEIAYYFPALNVYSR</sequence>
<name>NDK_JANMA</name>
<organism>
    <name type="scientific">Janthinobacterium sp. (strain Marseille)</name>
    <name type="common">Minibacterium massiliensis</name>
    <dbReference type="NCBI Taxonomy" id="375286"/>
    <lineage>
        <taxon>Bacteria</taxon>
        <taxon>Pseudomonadati</taxon>
        <taxon>Pseudomonadota</taxon>
        <taxon>Betaproteobacteria</taxon>
        <taxon>Burkholderiales</taxon>
        <taxon>Oxalobacteraceae</taxon>
        <taxon>Janthinobacterium</taxon>
    </lineage>
</organism>
<comment type="function">
    <text evidence="1">Major role in the synthesis of nucleoside triphosphates other than ATP. The ATP gamma phosphate is transferred to the NDP beta phosphate via a ping-pong mechanism, using a phosphorylated active-site intermediate.</text>
</comment>
<comment type="catalytic activity">
    <reaction evidence="1">
        <text>a 2'-deoxyribonucleoside 5'-diphosphate + ATP = a 2'-deoxyribonucleoside 5'-triphosphate + ADP</text>
        <dbReference type="Rhea" id="RHEA:44640"/>
        <dbReference type="ChEBI" id="CHEBI:30616"/>
        <dbReference type="ChEBI" id="CHEBI:61560"/>
        <dbReference type="ChEBI" id="CHEBI:73316"/>
        <dbReference type="ChEBI" id="CHEBI:456216"/>
        <dbReference type="EC" id="2.7.4.6"/>
    </reaction>
</comment>
<comment type="catalytic activity">
    <reaction evidence="1">
        <text>a ribonucleoside 5'-diphosphate + ATP = a ribonucleoside 5'-triphosphate + ADP</text>
        <dbReference type="Rhea" id="RHEA:18113"/>
        <dbReference type="ChEBI" id="CHEBI:30616"/>
        <dbReference type="ChEBI" id="CHEBI:57930"/>
        <dbReference type="ChEBI" id="CHEBI:61557"/>
        <dbReference type="ChEBI" id="CHEBI:456216"/>
        <dbReference type="EC" id="2.7.4.6"/>
    </reaction>
</comment>
<comment type="cofactor">
    <cofactor evidence="1">
        <name>Mg(2+)</name>
        <dbReference type="ChEBI" id="CHEBI:18420"/>
    </cofactor>
</comment>
<comment type="subunit">
    <text evidence="1">Homotetramer.</text>
</comment>
<comment type="subcellular location">
    <subcellularLocation>
        <location evidence="1">Cytoplasm</location>
    </subcellularLocation>
</comment>
<comment type="similarity">
    <text evidence="1">Belongs to the NDK family.</text>
</comment>
<dbReference type="EC" id="2.7.4.6" evidence="1"/>
<dbReference type="EMBL" id="CP000269">
    <property type="protein sequence ID" value="ABR88794.1"/>
    <property type="molecule type" value="Genomic_DNA"/>
</dbReference>
<dbReference type="RefSeq" id="WP_012079984.1">
    <property type="nucleotide sequence ID" value="NC_009659.1"/>
</dbReference>
<dbReference type="SMR" id="A6SZX4"/>
<dbReference type="STRING" id="375286.mma_2131"/>
<dbReference type="KEGG" id="mms:mma_2131"/>
<dbReference type="eggNOG" id="COG0105">
    <property type="taxonomic scope" value="Bacteria"/>
</dbReference>
<dbReference type="HOGENOM" id="CLU_060216_8_1_4"/>
<dbReference type="OrthoDB" id="9801161at2"/>
<dbReference type="Proteomes" id="UP000006388">
    <property type="component" value="Chromosome"/>
</dbReference>
<dbReference type="GO" id="GO:0005737">
    <property type="term" value="C:cytoplasm"/>
    <property type="evidence" value="ECO:0007669"/>
    <property type="project" value="UniProtKB-SubCell"/>
</dbReference>
<dbReference type="GO" id="GO:0005524">
    <property type="term" value="F:ATP binding"/>
    <property type="evidence" value="ECO:0007669"/>
    <property type="project" value="UniProtKB-UniRule"/>
</dbReference>
<dbReference type="GO" id="GO:0046872">
    <property type="term" value="F:metal ion binding"/>
    <property type="evidence" value="ECO:0007669"/>
    <property type="project" value="UniProtKB-KW"/>
</dbReference>
<dbReference type="GO" id="GO:0004550">
    <property type="term" value="F:nucleoside diphosphate kinase activity"/>
    <property type="evidence" value="ECO:0007669"/>
    <property type="project" value="UniProtKB-UniRule"/>
</dbReference>
<dbReference type="GO" id="GO:0006241">
    <property type="term" value="P:CTP biosynthetic process"/>
    <property type="evidence" value="ECO:0007669"/>
    <property type="project" value="UniProtKB-UniRule"/>
</dbReference>
<dbReference type="GO" id="GO:0006183">
    <property type="term" value="P:GTP biosynthetic process"/>
    <property type="evidence" value="ECO:0007669"/>
    <property type="project" value="UniProtKB-UniRule"/>
</dbReference>
<dbReference type="GO" id="GO:0006228">
    <property type="term" value="P:UTP biosynthetic process"/>
    <property type="evidence" value="ECO:0007669"/>
    <property type="project" value="UniProtKB-UniRule"/>
</dbReference>
<dbReference type="CDD" id="cd04413">
    <property type="entry name" value="NDPk_I"/>
    <property type="match status" value="1"/>
</dbReference>
<dbReference type="FunFam" id="3.30.70.141:FF:000001">
    <property type="entry name" value="Nucleoside diphosphate kinase"/>
    <property type="match status" value="1"/>
</dbReference>
<dbReference type="Gene3D" id="3.30.70.141">
    <property type="entry name" value="Nucleoside diphosphate kinase-like domain"/>
    <property type="match status" value="1"/>
</dbReference>
<dbReference type="HAMAP" id="MF_00451">
    <property type="entry name" value="NDP_kinase"/>
    <property type="match status" value="1"/>
</dbReference>
<dbReference type="InterPro" id="IPR034907">
    <property type="entry name" value="NDK-like_dom"/>
</dbReference>
<dbReference type="InterPro" id="IPR036850">
    <property type="entry name" value="NDK-like_dom_sf"/>
</dbReference>
<dbReference type="InterPro" id="IPR001564">
    <property type="entry name" value="Nucleoside_diP_kinase"/>
</dbReference>
<dbReference type="InterPro" id="IPR023005">
    <property type="entry name" value="Nucleoside_diP_kinase_AS"/>
</dbReference>
<dbReference type="NCBIfam" id="NF001908">
    <property type="entry name" value="PRK00668.1"/>
    <property type="match status" value="1"/>
</dbReference>
<dbReference type="PANTHER" id="PTHR46161">
    <property type="entry name" value="NUCLEOSIDE DIPHOSPHATE KINASE"/>
    <property type="match status" value="1"/>
</dbReference>
<dbReference type="PANTHER" id="PTHR46161:SF3">
    <property type="entry name" value="NUCLEOSIDE DIPHOSPHATE KINASE DDB_G0292928-RELATED"/>
    <property type="match status" value="1"/>
</dbReference>
<dbReference type="Pfam" id="PF00334">
    <property type="entry name" value="NDK"/>
    <property type="match status" value="1"/>
</dbReference>
<dbReference type="PRINTS" id="PR01243">
    <property type="entry name" value="NUCDPKINASE"/>
</dbReference>
<dbReference type="SMART" id="SM00562">
    <property type="entry name" value="NDK"/>
    <property type="match status" value="1"/>
</dbReference>
<dbReference type="SUPFAM" id="SSF54919">
    <property type="entry name" value="Nucleoside diphosphate kinase, NDK"/>
    <property type="match status" value="1"/>
</dbReference>
<dbReference type="PROSITE" id="PS00469">
    <property type="entry name" value="NDPK"/>
    <property type="match status" value="1"/>
</dbReference>
<dbReference type="PROSITE" id="PS51374">
    <property type="entry name" value="NDPK_LIKE"/>
    <property type="match status" value="1"/>
</dbReference>
<evidence type="ECO:0000255" key="1">
    <source>
        <dbReference type="HAMAP-Rule" id="MF_00451"/>
    </source>
</evidence>
<accession>A6SZX4</accession>
<proteinExistence type="inferred from homology"/>
<reference key="1">
    <citation type="journal article" date="2007" name="PLoS Genet.">
        <title>Genome analysis of Minibacterium massiliensis highlights the convergent evolution of water-living bacteria.</title>
        <authorList>
            <person name="Audic S."/>
            <person name="Robert C."/>
            <person name="Campagna B."/>
            <person name="Parinello H."/>
            <person name="Claverie J.-M."/>
            <person name="Raoult D."/>
            <person name="Drancourt M."/>
        </authorList>
    </citation>
    <scope>NUCLEOTIDE SEQUENCE [LARGE SCALE GENOMIC DNA]</scope>
    <source>
        <strain>Marseille</strain>
    </source>
</reference>